<dbReference type="EC" id="1.6.5.-" evidence="1"/>
<dbReference type="EC" id="1.7.1.17" evidence="1"/>
<dbReference type="EMBL" id="AE017355">
    <property type="protein sequence ID" value="AAT59768.1"/>
    <property type="molecule type" value="Genomic_DNA"/>
</dbReference>
<dbReference type="RefSeq" id="WP_000170017.1">
    <property type="nucleotide sequence ID" value="NC_005957.1"/>
</dbReference>
<dbReference type="RefSeq" id="YP_036354.1">
    <property type="nucleotide sequence ID" value="NC_005957.1"/>
</dbReference>
<dbReference type="SMR" id="Q6HJC2"/>
<dbReference type="KEGG" id="btk:BT9727_2025"/>
<dbReference type="PATRIC" id="fig|281309.8.peg.2130"/>
<dbReference type="HOGENOM" id="CLU_088964_3_1_9"/>
<dbReference type="Proteomes" id="UP000001301">
    <property type="component" value="Chromosome"/>
</dbReference>
<dbReference type="GO" id="GO:0009055">
    <property type="term" value="F:electron transfer activity"/>
    <property type="evidence" value="ECO:0007669"/>
    <property type="project" value="UniProtKB-UniRule"/>
</dbReference>
<dbReference type="GO" id="GO:0010181">
    <property type="term" value="F:FMN binding"/>
    <property type="evidence" value="ECO:0007669"/>
    <property type="project" value="UniProtKB-UniRule"/>
</dbReference>
<dbReference type="GO" id="GO:0016652">
    <property type="term" value="F:oxidoreductase activity, acting on NAD(P)H as acceptor"/>
    <property type="evidence" value="ECO:0007669"/>
    <property type="project" value="UniProtKB-UniRule"/>
</dbReference>
<dbReference type="GO" id="GO:0016655">
    <property type="term" value="F:oxidoreductase activity, acting on NAD(P)H, quinone or similar compound as acceptor"/>
    <property type="evidence" value="ECO:0007669"/>
    <property type="project" value="InterPro"/>
</dbReference>
<dbReference type="Gene3D" id="3.40.50.360">
    <property type="match status" value="1"/>
</dbReference>
<dbReference type="HAMAP" id="MF_01216">
    <property type="entry name" value="Azoreductase_type1"/>
    <property type="match status" value="1"/>
</dbReference>
<dbReference type="InterPro" id="IPR003680">
    <property type="entry name" value="Flavodoxin_fold"/>
</dbReference>
<dbReference type="InterPro" id="IPR029039">
    <property type="entry name" value="Flavoprotein-like_sf"/>
</dbReference>
<dbReference type="InterPro" id="IPR050104">
    <property type="entry name" value="FMN-dep_NADH:Q_OxRdtase_AzoR1"/>
</dbReference>
<dbReference type="InterPro" id="IPR023048">
    <property type="entry name" value="NADH:quinone_OxRdtase_FMN_depd"/>
</dbReference>
<dbReference type="NCBIfam" id="NF010075">
    <property type="entry name" value="PRK13556.1"/>
    <property type="match status" value="1"/>
</dbReference>
<dbReference type="PANTHER" id="PTHR43741">
    <property type="entry name" value="FMN-DEPENDENT NADH-AZOREDUCTASE 1"/>
    <property type="match status" value="1"/>
</dbReference>
<dbReference type="PANTHER" id="PTHR43741:SF7">
    <property type="entry name" value="FMN-DEPENDENT NADH:QUINONE OXIDOREDUCTASE"/>
    <property type="match status" value="1"/>
</dbReference>
<dbReference type="Pfam" id="PF02525">
    <property type="entry name" value="Flavodoxin_2"/>
    <property type="match status" value="1"/>
</dbReference>
<dbReference type="SUPFAM" id="SSF52218">
    <property type="entry name" value="Flavoproteins"/>
    <property type="match status" value="1"/>
</dbReference>
<proteinExistence type="inferred from homology"/>
<keyword id="KW-0285">Flavoprotein</keyword>
<keyword id="KW-0288">FMN</keyword>
<keyword id="KW-0520">NAD</keyword>
<keyword id="KW-0560">Oxidoreductase</keyword>
<accession>Q6HJC2</accession>
<name>AZOR2_BACHK</name>
<gene>
    <name evidence="1" type="primary">azoR2</name>
    <name type="ordered locus">BT9727_2025</name>
</gene>
<protein>
    <recommendedName>
        <fullName evidence="1">FMN-dependent NADH:quinone oxidoreductase 2</fullName>
        <ecNumber evidence="1">1.6.5.-</ecNumber>
    </recommendedName>
    <alternativeName>
        <fullName evidence="1">Azo-dye reductase 2</fullName>
    </alternativeName>
    <alternativeName>
        <fullName evidence="1">FMN-dependent NADH-azo compound oxidoreductase 2</fullName>
    </alternativeName>
    <alternativeName>
        <fullName evidence="1">FMN-dependent NADH-azoreductase 2</fullName>
        <ecNumber evidence="1">1.7.1.17</ecNumber>
    </alternativeName>
</protein>
<feature type="chain" id="PRO_0000245892" description="FMN-dependent NADH:quinone oxidoreductase 2">
    <location>
        <begin position="1"/>
        <end position="211"/>
    </location>
</feature>
<feature type="binding site" evidence="1">
    <location>
        <begin position="102"/>
        <end position="105"/>
    </location>
    <ligand>
        <name>FMN</name>
        <dbReference type="ChEBI" id="CHEBI:58210"/>
    </ligand>
</feature>
<sequence length="211" mass="22994">MTKVLFITANPNSAEGSFGMAVGEAFIEAYKNEHPQDEVVTIDLFNTTVPAIDADVFAAWGKFAAGEGFEALTEAQQQKVAAMNTNLETFMHADRYVFVTPMWNFSYPPVVKAYLDNLAIAGKTFKYTENGPVGLLEGKKALHIQATGGVYSEGPYAAVDFGRNHLKTVLGFIGVNETEYIAVEGMNANPEKAQEIKEAAIANARELAKRF</sequence>
<evidence type="ECO:0000255" key="1">
    <source>
        <dbReference type="HAMAP-Rule" id="MF_01216"/>
    </source>
</evidence>
<comment type="function">
    <text evidence="1">Quinone reductase that provides resistance to thiol-specific stress caused by electrophilic quinones.</text>
</comment>
<comment type="function">
    <text evidence="1">Also exhibits azoreductase activity. Catalyzes the reductive cleavage of the azo bond in aromatic azo compounds to the corresponding amines.</text>
</comment>
<comment type="catalytic activity">
    <reaction evidence="1">
        <text>2 a quinone + NADH + H(+) = 2 a 1,4-benzosemiquinone + NAD(+)</text>
        <dbReference type="Rhea" id="RHEA:65952"/>
        <dbReference type="ChEBI" id="CHEBI:15378"/>
        <dbReference type="ChEBI" id="CHEBI:57540"/>
        <dbReference type="ChEBI" id="CHEBI:57945"/>
        <dbReference type="ChEBI" id="CHEBI:132124"/>
        <dbReference type="ChEBI" id="CHEBI:134225"/>
    </reaction>
</comment>
<comment type="catalytic activity">
    <reaction evidence="1">
        <text>N,N-dimethyl-1,4-phenylenediamine + anthranilate + 2 NAD(+) = 2-(4-dimethylaminophenyl)diazenylbenzoate + 2 NADH + 2 H(+)</text>
        <dbReference type="Rhea" id="RHEA:55872"/>
        <dbReference type="ChEBI" id="CHEBI:15378"/>
        <dbReference type="ChEBI" id="CHEBI:15783"/>
        <dbReference type="ChEBI" id="CHEBI:16567"/>
        <dbReference type="ChEBI" id="CHEBI:57540"/>
        <dbReference type="ChEBI" id="CHEBI:57945"/>
        <dbReference type="ChEBI" id="CHEBI:71579"/>
        <dbReference type="EC" id="1.7.1.17"/>
    </reaction>
</comment>
<comment type="cofactor">
    <cofactor evidence="1">
        <name>FMN</name>
        <dbReference type="ChEBI" id="CHEBI:58210"/>
    </cofactor>
    <text evidence="1">Binds 1 FMN per subunit.</text>
</comment>
<comment type="subunit">
    <text evidence="1">Homodimer.</text>
</comment>
<comment type="similarity">
    <text evidence="1">Belongs to the azoreductase type 1 family.</text>
</comment>
<organism>
    <name type="scientific">Bacillus thuringiensis subsp. konkukian (strain 97-27)</name>
    <dbReference type="NCBI Taxonomy" id="281309"/>
    <lineage>
        <taxon>Bacteria</taxon>
        <taxon>Bacillati</taxon>
        <taxon>Bacillota</taxon>
        <taxon>Bacilli</taxon>
        <taxon>Bacillales</taxon>
        <taxon>Bacillaceae</taxon>
        <taxon>Bacillus</taxon>
        <taxon>Bacillus cereus group</taxon>
    </lineage>
</organism>
<reference key="1">
    <citation type="journal article" date="2006" name="J. Bacteriol.">
        <title>Pathogenomic sequence analysis of Bacillus cereus and Bacillus thuringiensis isolates closely related to Bacillus anthracis.</title>
        <authorList>
            <person name="Han C.S."/>
            <person name="Xie G."/>
            <person name="Challacombe J.F."/>
            <person name="Altherr M.R."/>
            <person name="Bhotika S.S."/>
            <person name="Bruce D."/>
            <person name="Campbell C.S."/>
            <person name="Campbell M.L."/>
            <person name="Chen J."/>
            <person name="Chertkov O."/>
            <person name="Cleland C."/>
            <person name="Dimitrijevic M."/>
            <person name="Doggett N.A."/>
            <person name="Fawcett J.J."/>
            <person name="Glavina T."/>
            <person name="Goodwin L.A."/>
            <person name="Hill K.K."/>
            <person name="Hitchcock P."/>
            <person name="Jackson P.J."/>
            <person name="Keim P."/>
            <person name="Kewalramani A.R."/>
            <person name="Longmire J."/>
            <person name="Lucas S."/>
            <person name="Malfatti S."/>
            <person name="McMurry K."/>
            <person name="Meincke L.J."/>
            <person name="Misra M."/>
            <person name="Moseman B.L."/>
            <person name="Mundt M."/>
            <person name="Munk A.C."/>
            <person name="Okinaka R.T."/>
            <person name="Parson-Quintana B."/>
            <person name="Reilly L.P."/>
            <person name="Richardson P."/>
            <person name="Robinson D.L."/>
            <person name="Rubin E."/>
            <person name="Saunders E."/>
            <person name="Tapia R."/>
            <person name="Tesmer J.G."/>
            <person name="Thayer N."/>
            <person name="Thompson L.S."/>
            <person name="Tice H."/>
            <person name="Ticknor L.O."/>
            <person name="Wills P.L."/>
            <person name="Brettin T.S."/>
            <person name="Gilna P."/>
        </authorList>
    </citation>
    <scope>NUCLEOTIDE SEQUENCE [LARGE SCALE GENOMIC DNA]</scope>
    <source>
        <strain>97-27</strain>
    </source>
</reference>